<keyword id="KW-0963">Cytoplasm</keyword>
<keyword id="KW-0378">Hydrolase</keyword>
<keyword id="KW-0520">NAD</keyword>
<keyword id="KW-0554">One-carbon metabolism</keyword>
<accession>B3QMF5</accession>
<organism>
    <name type="scientific">Chlorobaculum parvum (strain DSM 263 / NCIMB 8327)</name>
    <name type="common">Chlorobium vibrioforme subsp. thiosulfatophilum</name>
    <dbReference type="NCBI Taxonomy" id="517417"/>
    <lineage>
        <taxon>Bacteria</taxon>
        <taxon>Pseudomonadati</taxon>
        <taxon>Chlorobiota</taxon>
        <taxon>Chlorobiia</taxon>
        <taxon>Chlorobiales</taxon>
        <taxon>Chlorobiaceae</taxon>
        <taxon>Chlorobaculum</taxon>
    </lineage>
</organism>
<proteinExistence type="inferred from homology"/>
<feature type="chain" id="PRO_1000129276" description="Adenosylhomocysteinase">
    <location>
        <begin position="1"/>
        <end position="471"/>
    </location>
</feature>
<feature type="binding site" evidence="1">
    <location>
        <position position="60"/>
    </location>
    <ligand>
        <name>substrate</name>
    </ligand>
</feature>
<feature type="binding site" evidence="1">
    <location>
        <position position="135"/>
    </location>
    <ligand>
        <name>substrate</name>
    </ligand>
</feature>
<feature type="binding site" evidence="1">
    <location>
        <position position="196"/>
    </location>
    <ligand>
        <name>substrate</name>
    </ligand>
</feature>
<feature type="binding site" evidence="1">
    <location>
        <begin position="197"/>
        <end position="199"/>
    </location>
    <ligand>
        <name>NAD(+)</name>
        <dbReference type="ChEBI" id="CHEBI:57540"/>
    </ligand>
</feature>
<feature type="binding site" evidence="1">
    <location>
        <position position="226"/>
    </location>
    <ligand>
        <name>substrate</name>
    </ligand>
</feature>
<feature type="binding site" evidence="1">
    <location>
        <position position="230"/>
    </location>
    <ligand>
        <name>substrate</name>
    </ligand>
</feature>
<feature type="binding site" evidence="1">
    <location>
        <position position="231"/>
    </location>
    <ligand>
        <name>NAD(+)</name>
        <dbReference type="ChEBI" id="CHEBI:57540"/>
    </ligand>
</feature>
<feature type="binding site" evidence="1">
    <location>
        <begin position="260"/>
        <end position="265"/>
    </location>
    <ligand>
        <name>NAD(+)</name>
        <dbReference type="ChEBI" id="CHEBI:57540"/>
    </ligand>
</feature>
<feature type="binding site" evidence="1">
    <location>
        <position position="283"/>
    </location>
    <ligand>
        <name>NAD(+)</name>
        <dbReference type="ChEBI" id="CHEBI:57540"/>
    </ligand>
</feature>
<feature type="binding site" evidence="1">
    <location>
        <position position="318"/>
    </location>
    <ligand>
        <name>NAD(+)</name>
        <dbReference type="ChEBI" id="CHEBI:57540"/>
    </ligand>
</feature>
<feature type="binding site" evidence="1">
    <location>
        <begin position="339"/>
        <end position="341"/>
    </location>
    <ligand>
        <name>NAD(+)</name>
        <dbReference type="ChEBI" id="CHEBI:57540"/>
    </ligand>
</feature>
<feature type="binding site" evidence="1">
    <location>
        <position position="387"/>
    </location>
    <ligand>
        <name>NAD(+)</name>
        <dbReference type="ChEBI" id="CHEBI:57540"/>
    </ligand>
</feature>
<sequence>MTTEAAVLDYKVADISLAEWGRKEIEIAEKEMPGLMATRKKYEGKKPLAGARIAGSLHMTIQTAVLIETLVELGADVRWASCNIFSTQDHAAAAIAAAGVPVFAWKGETLDEYWWCTRQILEFEGGLGPNLIVDDGGDATLMIHLGYKIENDPSMLDKTPGNAEERALFAQLKEVFAEDNQRWHKVAAGMKGVSEETTTGVHRLYQMMEKGELLFPAINVNDSVTKSKFDNLYGCRESLADGIKRATDVMIAGKVAVVLGYGDVGKGCAHSMRSYGARVIVTEIDPICALQAAMEGFQVTTIEEALEEGNIYVTTTGNKDVITLEHMKKMKDEAIVCNIGHFDNEIQVDALNNFKGATRINIKPQVDKYVFEDGRCIYLLAEGRLVNLGCATGHPSFVMSNSFTNQTLAQIELWKNNYDVDVYRLPKHLDEEVARLHLGQIGVKLTTLSKEQADYIGVPVEGPYKPEHYRY</sequence>
<name>SAHH_CHLP8</name>
<evidence type="ECO:0000255" key="1">
    <source>
        <dbReference type="HAMAP-Rule" id="MF_00563"/>
    </source>
</evidence>
<comment type="function">
    <text evidence="1">May play a key role in the regulation of the intracellular concentration of adenosylhomocysteine.</text>
</comment>
<comment type="catalytic activity">
    <reaction evidence="1">
        <text>S-adenosyl-L-homocysteine + H2O = L-homocysteine + adenosine</text>
        <dbReference type="Rhea" id="RHEA:21708"/>
        <dbReference type="ChEBI" id="CHEBI:15377"/>
        <dbReference type="ChEBI" id="CHEBI:16335"/>
        <dbReference type="ChEBI" id="CHEBI:57856"/>
        <dbReference type="ChEBI" id="CHEBI:58199"/>
        <dbReference type="EC" id="3.13.2.1"/>
    </reaction>
</comment>
<comment type="cofactor">
    <cofactor evidence="1">
        <name>NAD(+)</name>
        <dbReference type="ChEBI" id="CHEBI:57540"/>
    </cofactor>
    <text evidence="1">Binds 1 NAD(+) per subunit.</text>
</comment>
<comment type="pathway">
    <text evidence="1">Amino-acid biosynthesis; L-homocysteine biosynthesis; L-homocysteine from S-adenosyl-L-homocysteine: step 1/1.</text>
</comment>
<comment type="subcellular location">
    <subcellularLocation>
        <location evidence="1">Cytoplasm</location>
    </subcellularLocation>
</comment>
<comment type="similarity">
    <text evidence="1">Belongs to the adenosylhomocysteinase family.</text>
</comment>
<protein>
    <recommendedName>
        <fullName evidence="1">Adenosylhomocysteinase</fullName>
        <ecNumber evidence="1">3.13.2.1</ecNumber>
    </recommendedName>
    <alternativeName>
        <fullName evidence="1">S-adenosyl-L-homocysteine hydrolase</fullName>
        <shortName evidence="1">AdoHcyase</shortName>
    </alternativeName>
</protein>
<dbReference type="EC" id="3.13.2.1" evidence="1"/>
<dbReference type="EMBL" id="CP001099">
    <property type="protein sequence ID" value="ACF11108.1"/>
    <property type="molecule type" value="Genomic_DNA"/>
</dbReference>
<dbReference type="RefSeq" id="WP_012501941.1">
    <property type="nucleotide sequence ID" value="NC_011027.1"/>
</dbReference>
<dbReference type="SMR" id="B3QMF5"/>
<dbReference type="STRING" id="517417.Cpar_0688"/>
<dbReference type="KEGG" id="cpc:Cpar_0688"/>
<dbReference type="eggNOG" id="COG0499">
    <property type="taxonomic scope" value="Bacteria"/>
</dbReference>
<dbReference type="HOGENOM" id="CLU_025194_2_1_10"/>
<dbReference type="OrthoDB" id="9802717at2"/>
<dbReference type="UniPathway" id="UPA00314">
    <property type="reaction ID" value="UER00076"/>
</dbReference>
<dbReference type="Proteomes" id="UP000008811">
    <property type="component" value="Chromosome"/>
</dbReference>
<dbReference type="GO" id="GO:0005829">
    <property type="term" value="C:cytosol"/>
    <property type="evidence" value="ECO:0007669"/>
    <property type="project" value="TreeGrafter"/>
</dbReference>
<dbReference type="GO" id="GO:0004013">
    <property type="term" value="F:adenosylhomocysteinase activity"/>
    <property type="evidence" value="ECO:0007669"/>
    <property type="project" value="UniProtKB-UniRule"/>
</dbReference>
<dbReference type="GO" id="GO:0071269">
    <property type="term" value="P:L-homocysteine biosynthetic process"/>
    <property type="evidence" value="ECO:0007669"/>
    <property type="project" value="UniProtKB-UniRule"/>
</dbReference>
<dbReference type="GO" id="GO:0006730">
    <property type="term" value="P:one-carbon metabolic process"/>
    <property type="evidence" value="ECO:0007669"/>
    <property type="project" value="UniProtKB-KW"/>
</dbReference>
<dbReference type="GO" id="GO:0033353">
    <property type="term" value="P:S-adenosylmethionine cycle"/>
    <property type="evidence" value="ECO:0007669"/>
    <property type="project" value="TreeGrafter"/>
</dbReference>
<dbReference type="CDD" id="cd00401">
    <property type="entry name" value="SAHH"/>
    <property type="match status" value="1"/>
</dbReference>
<dbReference type="FunFam" id="3.40.50.720:FF:000004">
    <property type="entry name" value="Adenosylhomocysteinase"/>
    <property type="match status" value="1"/>
</dbReference>
<dbReference type="Gene3D" id="3.40.50.1480">
    <property type="entry name" value="Adenosylhomocysteinase-like"/>
    <property type="match status" value="1"/>
</dbReference>
<dbReference type="Gene3D" id="3.40.50.720">
    <property type="entry name" value="NAD(P)-binding Rossmann-like Domain"/>
    <property type="match status" value="1"/>
</dbReference>
<dbReference type="HAMAP" id="MF_00563">
    <property type="entry name" value="AdoHcyase"/>
    <property type="match status" value="1"/>
</dbReference>
<dbReference type="InterPro" id="IPR042172">
    <property type="entry name" value="Adenosylhomocyst_ase-like_sf"/>
</dbReference>
<dbReference type="InterPro" id="IPR000043">
    <property type="entry name" value="Adenosylhomocysteinase-like"/>
</dbReference>
<dbReference type="InterPro" id="IPR015878">
    <property type="entry name" value="Ado_hCys_hydrolase_NAD-bd"/>
</dbReference>
<dbReference type="InterPro" id="IPR036291">
    <property type="entry name" value="NAD(P)-bd_dom_sf"/>
</dbReference>
<dbReference type="InterPro" id="IPR020082">
    <property type="entry name" value="S-Ado-L-homoCys_hydrolase_CS"/>
</dbReference>
<dbReference type="NCBIfam" id="TIGR00936">
    <property type="entry name" value="ahcY"/>
    <property type="match status" value="1"/>
</dbReference>
<dbReference type="NCBIfam" id="NF004005">
    <property type="entry name" value="PRK05476.2-3"/>
    <property type="match status" value="1"/>
</dbReference>
<dbReference type="PANTHER" id="PTHR23420">
    <property type="entry name" value="ADENOSYLHOMOCYSTEINASE"/>
    <property type="match status" value="1"/>
</dbReference>
<dbReference type="PANTHER" id="PTHR23420:SF0">
    <property type="entry name" value="ADENOSYLHOMOCYSTEINASE"/>
    <property type="match status" value="1"/>
</dbReference>
<dbReference type="Pfam" id="PF05221">
    <property type="entry name" value="AdoHcyase"/>
    <property type="match status" value="1"/>
</dbReference>
<dbReference type="Pfam" id="PF00670">
    <property type="entry name" value="AdoHcyase_NAD"/>
    <property type="match status" value="1"/>
</dbReference>
<dbReference type="PIRSF" id="PIRSF001109">
    <property type="entry name" value="Ad_hcy_hydrolase"/>
    <property type="match status" value="1"/>
</dbReference>
<dbReference type="SMART" id="SM00996">
    <property type="entry name" value="AdoHcyase"/>
    <property type="match status" value="1"/>
</dbReference>
<dbReference type="SMART" id="SM00997">
    <property type="entry name" value="AdoHcyase_NAD"/>
    <property type="match status" value="1"/>
</dbReference>
<dbReference type="SUPFAM" id="SSF52283">
    <property type="entry name" value="Formate/glycerate dehydrogenase catalytic domain-like"/>
    <property type="match status" value="1"/>
</dbReference>
<dbReference type="SUPFAM" id="SSF51735">
    <property type="entry name" value="NAD(P)-binding Rossmann-fold domains"/>
    <property type="match status" value="1"/>
</dbReference>
<dbReference type="PROSITE" id="PS00738">
    <property type="entry name" value="ADOHCYASE_1"/>
    <property type="match status" value="1"/>
</dbReference>
<dbReference type="PROSITE" id="PS00739">
    <property type="entry name" value="ADOHCYASE_2"/>
    <property type="match status" value="1"/>
</dbReference>
<gene>
    <name evidence="1" type="primary">ahcY</name>
    <name type="ordered locus">Cpar_0688</name>
</gene>
<reference key="1">
    <citation type="submission" date="2008-06" db="EMBL/GenBank/DDBJ databases">
        <title>Complete sequence of Chlorobaculum parvum NCIB 8327.</title>
        <authorList>
            <consortium name="US DOE Joint Genome Institute"/>
            <person name="Lucas S."/>
            <person name="Copeland A."/>
            <person name="Lapidus A."/>
            <person name="Glavina del Rio T."/>
            <person name="Dalin E."/>
            <person name="Tice H."/>
            <person name="Bruce D."/>
            <person name="Goodwin L."/>
            <person name="Pitluck S."/>
            <person name="Schmutz J."/>
            <person name="Larimer F."/>
            <person name="Land M."/>
            <person name="Hauser L."/>
            <person name="Kyrpides N."/>
            <person name="Mikhailova N."/>
            <person name="Zhao F."/>
            <person name="Li T."/>
            <person name="Liu Z."/>
            <person name="Overmann J."/>
            <person name="Bryant D.A."/>
            <person name="Richardson P."/>
        </authorList>
    </citation>
    <scope>NUCLEOTIDE SEQUENCE [LARGE SCALE GENOMIC DNA]</scope>
    <source>
        <strain>DSM 263 / NCIMB 8327</strain>
    </source>
</reference>